<name>CODB_ECO57</name>
<reference key="1">
    <citation type="journal article" date="2001" name="Nature">
        <title>Genome sequence of enterohaemorrhagic Escherichia coli O157:H7.</title>
        <authorList>
            <person name="Perna N.T."/>
            <person name="Plunkett G. III"/>
            <person name="Burland V."/>
            <person name="Mau B."/>
            <person name="Glasner J.D."/>
            <person name="Rose D.J."/>
            <person name="Mayhew G.F."/>
            <person name="Evans P.S."/>
            <person name="Gregor J."/>
            <person name="Kirkpatrick H.A."/>
            <person name="Posfai G."/>
            <person name="Hackett J."/>
            <person name="Klink S."/>
            <person name="Boutin A."/>
            <person name="Shao Y."/>
            <person name="Miller L."/>
            <person name="Grotbeck E.J."/>
            <person name="Davis N.W."/>
            <person name="Lim A."/>
            <person name="Dimalanta E.T."/>
            <person name="Potamousis K."/>
            <person name="Apodaca J."/>
            <person name="Anantharaman T.S."/>
            <person name="Lin J."/>
            <person name="Yen G."/>
            <person name="Schwartz D.C."/>
            <person name="Welch R.A."/>
            <person name="Blattner F.R."/>
        </authorList>
    </citation>
    <scope>NUCLEOTIDE SEQUENCE [LARGE SCALE GENOMIC DNA]</scope>
    <source>
        <strain>O157:H7 / EDL933 / ATCC 700927 / EHEC</strain>
    </source>
</reference>
<reference key="2">
    <citation type="journal article" date="2001" name="DNA Res.">
        <title>Complete genome sequence of enterohemorrhagic Escherichia coli O157:H7 and genomic comparison with a laboratory strain K-12.</title>
        <authorList>
            <person name="Hayashi T."/>
            <person name="Makino K."/>
            <person name="Ohnishi M."/>
            <person name="Kurokawa K."/>
            <person name="Ishii K."/>
            <person name="Yokoyama K."/>
            <person name="Han C.-G."/>
            <person name="Ohtsubo E."/>
            <person name="Nakayama K."/>
            <person name="Murata T."/>
            <person name="Tanaka M."/>
            <person name="Tobe T."/>
            <person name="Iida T."/>
            <person name="Takami H."/>
            <person name="Honda T."/>
            <person name="Sasakawa C."/>
            <person name="Ogasawara N."/>
            <person name="Yasunaga T."/>
            <person name="Kuhara S."/>
            <person name="Shiba T."/>
            <person name="Hattori M."/>
            <person name="Shinagawa H."/>
        </authorList>
    </citation>
    <scope>NUCLEOTIDE SEQUENCE [LARGE SCALE GENOMIC DNA]</scope>
    <source>
        <strain>O157:H7 / Sakai / RIMD 0509952 / EHEC</strain>
    </source>
</reference>
<feature type="chain" id="PRO_0000197933" description="Cytosine permease">
    <location>
        <begin position="1"/>
        <end position="419"/>
    </location>
</feature>
<feature type="topological domain" description="Cytoplasmic" evidence="1">
    <location>
        <begin position="1"/>
        <end position="19"/>
    </location>
</feature>
<feature type="transmembrane region" description="Helical; Name=1" evidence="1">
    <location>
        <begin position="20"/>
        <end position="39"/>
    </location>
</feature>
<feature type="topological domain" description="Periplasmic" evidence="1">
    <location>
        <begin position="40"/>
        <end position="51"/>
    </location>
</feature>
<feature type="transmembrane region" description="Helical; Name=2" evidence="1">
    <location>
        <begin position="52"/>
        <end position="71"/>
    </location>
</feature>
<feature type="topological domain" description="Cytoplasmic" evidence="1">
    <location>
        <begin position="72"/>
        <end position="100"/>
    </location>
</feature>
<feature type="transmembrane region" description="Helical; Name=3" evidence="1">
    <location>
        <begin position="101"/>
        <end position="120"/>
    </location>
</feature>
<feature type="topological domain" description="Periplasmic" evidence="1">
    <location>
        <begin position="121"/>
        <end position="127"/>
    </location>
</feature>
<feature type="transmembrane region" description="Helical; Name=4" evidence="1">
    <location>
        <begin position="128"/>
        <end position="147"/>
    </location>
</feature>
<feature type="topological domain" description="Cytoplasmic" evidence="1">
    <location>
        <begin position="148"/>
        <end position="152"/>
    </location>
</feature>
<feature type="transmembrane region" description="Helical; Name=5" evidence="1">
    <location>
        <begin position="153"/>
        <end position="172"/>
    </location>
</feature>
<feature type="topological domain" description="Periplasmic" evidence="1">
    <location>
        <begin position="173"/>
        <end position="192"/>
    </location>
</feature>
<feature type="transmembrane region" description="Helical; Name=6" evidence="1">
    <location>
        <begin position="193"/>
        <end position="212"/>
    </location>
</feature>
<feature type="topological domain" description="Cytoplasmic" evidence="1">
    <location>
        <begin position="213"/>
        <end position="221"/>
    </location>
</feature>
<feature type="transmembrane region" description="Helical; Name=7" evidence="1">
    <location>
        <begin position="222"/>
        <end position="242"/>
    </location>
</feature>
<feature type="topological domain" description="Periplasmic" evidence="1">
    <location>
        <begin position="243"/>
        <end position="257"/>
    </location>
</feature>
<feature type="transmembrane region" description="Helical; Name=8" evidence="1">
    <location>
        <begin position="258"/>
        <end position="277"/>
    </location>
</feature>
<feature type="topological domain" description="Cytoplasmic" evidence="1">
    <location>
        <begin position="278"/>
        <end position="300"/>
    </location>
</feature>
<feature type="transmembrane region" description="Helical; Name=9" evidence="1">
    <location>
        <begin position="301"/>
        <end position="320"/>
    </location>
</feature>
<feature type="topological domain" description="Periplasmic" evidence="1">
    <location>
        <position position="321"/>
    </location>
</feature>
<feature type="transmembrane region" description="Helical; Name=10" evidence="1">
    <location>
        <begin position="322"/>
        <end position="341"/>
    </location>
</feature>
<feature type="topological domain" description="Cytoplasmic" evidence="1">
    <location>
        <begin position="342"/>
        <end position="358"/>
    </location>
</feature>
<feature type="transmembrane region" description="Helical; Name=11" evidence="1">
    <location>
        <begin position="359"/>
        <end position="378"/>
    </location>
</feature>
<feature type="topological domain" description="Periplasmic" evidence="1">
    <location>
        <begin position="379"/>
        <end position="380"/>
    </location>
</feature>
<feature type="transmembrane region" description="Helical; Name=12" evidence="1">
    <location>
        <begin position="381"/>
        <end position="400"/>
    </location>
</feature>
<feature type="topological domain" description="Cytoplasmic" evidence="1">
    <location>
        <begin position="401"/>
        <end position="419"/>
    </location>
</feature>
<comment type="function">
    <text>Required for cytosine transport into the cell.</text>
</comment>
<comment type="subcellular location">
    <subcellularLocation>
        <location>Cell inner membrane</location>
        <topology>Multi-pass membrane protein</topology>
    </subcellularLocation>
</comment>
<comment type="similarity">
    <text evidence="1">Belongs to the purine-cytosine permease (2.A.39) family.</text>
</comment>
<accession>Q8X691</accession>
<accession>Q7AH64</accession>
<evidence type="ECO:0000305" key="1"/>
<keyword id="KW-0997">Cell inner membrane</keyword>
<keyword id="KW-1003">Cell membrane</keyword>
<keyword id="KW-0205">Cytosine metabolism</keyword>
<keyword id="KW-0472">Membrane</keyword>
<keyword id="KW-1185">Reference proteome</keyword>
<keyword id="KW-0812">Transmembrane</keyword>
<keyword id="KW-1133">Transmembrane helix</keyword>
<keyword id="KW-0813">Transport</keyword>
<organism>
    <name type="scientific">Escherichia coli O157:H7</name>
    <dbReference type="NCBI Taxonomy" id="83334"/>
    <lineage>
        <taxon>Bacteria</taxon>
        <taxon>Pseudomonadati</taxon>
        <taxon>Pseudomonadota</taxon>
        <taxon>Gammaproteobacteria</taxon>
        <taxon>Enterobacterales</taxon>
        <taxon>Enterobacteriaceae</taxon>
        <taxon>Escherichia</taxon>
    </lineage>
</organism>
<dbReference type="EMBL" id="AE005174">
    <property type="protein sequence ID" value="AAG54685.1"/>
    <property type="molecule type" value="Genomic_DNA"/>
</dbReference>
<dbReference type="EMBL" id="BA000007">
    <property type="protein sequence ID" value="BAB33812.1"/>
    <property type="molecule type" value="Genomic_DNA"/>
</dbReference>
<dbReference type="PIR" id="A85528">
    <property type="entry name" value="A85528"/>
</dbReference>
<dbReference type="PIR" id="E90677">
    <property type="entry name" value="E90677"/>
</dbReference>
<dbReference type="RefSeq" id="NP_308416.1">
    <property type="nucleotide sequence ID" value="NC_002695.1"/>
</dbReference>
<dbReference type="RefSeq" id="WP_000076226.1">
    <property type="nucleotide sequence ID" value="NZ_VOAI01000005.1"/>
</dbReference>
<dbReference type="SMR" id="Q8X691"/>
<dbReference type="STRING" id="155864.Z0432"/>
<dbReference type="GeneID" id="914491"/>
<dbReference type="KEGG" id="ece:Z0432"/>
<dbReference type="KEGG" id="ecs:ECs_0389"/>
<dbReference type="PATRIC" id="fig|386585.9.peg.484"/>
<dbReference type="eggNOG" id="COG1457">
    <property type="taxonomic scope" value="Bacteria"/>
</dbReference>
<dbReference type="HOGENOM" id="CLU_035711_1_1_6"/>
<dbReference type="OMA" id="TQIGWYA"/>
<dbReference type="Proteomes" id="UP000000558">
    <property type="component" value="Chromosome"/>
</dbReference>
<dbReference type="Proteomes" id="UP000002519">
    <property type="component" value="Chromosome"/>
</dbReference>
<dbReference type="GO" id="GO:0005886">
    <property type="term" value="C:plasma membrane"/>
    <property type="evidence" value="ECO:0007669"/>
    <property type="project" value="UniProtKB-SubCell"/>
</dbReference>
<dbReference type="GO" id="GO:0015209">
    <property type="term" value="F:cytosine transmembrane transporter activity"/>
    <property type="evidence" value="ECO:0007669"/>
    <property type="project" value="InterPro"/>
</dbReference>
<dbReference type="GO" id="GO:0019858">
    <property type="term" value="P:cytosine metabolic process"/>
    <property type="evidence" value="ECO:0007669"/>
    <property type="project" value="UniProtKB-KW"/>
</dbReference>
<dbReference type="CDD" id="cd11484">
    <property type="entry name" value="SLC-NCS1sbd_CobB-like"/>
    <property type="match status" value="1"/>
</dbReference>
<dbReference type="FunFam" id="1.10.4160.10:FF:000003">
    <property type="entry name" value="Cytosine permease"/>
    <property type="match status" value="1"/>
</dbReference>
<dbReference type="Gene3D" id="1.10.4160.10">
    <property type="entry name" value="Hydantoin permease"/>
    <property type="match status" value="1"/>
</dbReference>
<dbReference type="InterPro" id="IPR030191">
    <property type="entry name" value="CodB"/>
</dbReference>
<dbReference type="InterPro" id="IPR001248">
    <property type="entry name" value="Pur-cyt_permease"/>
</dbReference>
<dbReference type="NCBIfam" id="NF008241">
    <property type="entry name" value="PRK11017.1"/>
    <property type="match status" value="1"/>
</dbReference>
<dbReference type="PANTHER" id="PTHR30569:SF0">
    <property type="entry name" value="CYTOSINE PERMEASE"/>
    <property type="match status" value="1"/>
</dbReference>
<dbReference type="PANTHER" id="PTHR30569">
    <property type="entry name" value="CYTOSINE TRANSPORTER CODB"/>
    <property type="match status" value="1"/>
</dbReference>
<dbReference type="Pfam" id="PF02133">
    <property type="entry name" value="Transp_cyt_pur"/>
    <property type="match status" value="1"/>
</dbReference>
<sequence length="419" mass="43664">MSQDNNFSQGPVPQSARKGVLALTFVMLGLTFFSASMWTGGTLGTGLSYHDFFLAVLIGNLLLGIYTSFLGYIGAKTGLTTHLLARFSFGVKGSWLPSLLLGGTQVGWFGVGVAMFAIPVGKATGLDINLLIAVSGLLMTVTVFFGISALTVLSLIAVPAIACLGGYSVWLAVNGMGGLDALKAVVPAQPLDFNVALALVVGSFISAGTLTADFVRFGRNAKLAVLVAMVAFFLGNSLMFIFGAAGAAALGMADISDVMIAQGLLLPAIVVLGLNIWTTNDNALYASGLGFANITGMSSKTLSVINGIIGTVCALWLYNNFVGWLTFLSAAIPPVGGVIIADYLMNRRRYEHFATTRMMSVNWVAILAVALGIAAGHWLPGIVPVNAVLGGALSYLILNPILNRKTTAAMTHVEANSVE</sequence>
<gene>
    <name type="primary">codB</name>
    <name type="ordered locus">Z0432</name>
    <name type="ordered locus">ECs0389</name>
</gene>
<proteinExistence type="inferred from homology"/>
<protein>
    <recommendedName>
        <fullName>Cytosine permease</fullName>
    </recommendedName>
</protein>